<reference key="1">
    <citation type="journal article" date="2009" name="Proc. Natl. Acad. Sci. U.S.A.">
        <title>Characterizing a model human gut microbiota composed of members of its two dominant bacterial phyla.</title>
        <authorList>
            <person name="Mahowald M.A."/>
            <person name="Rey F.E."/>
            <person name="Seedorf H."/>
            <person name="Turnbaugh P.J."/>
            <person name="Fulton R.S."/>
            <person name="Wollam A."/>
            <person name="Shah N."/>
            <person name="Wang C."/>
            <person name="Magrini V."/>
            <person name="Wilson R.K."/>
            <person name="Cantarel B.L."/>
            <person name="Coutinho P.M."/>
            <person name="Henrissat B."/>
            <person name="Crock L.W."/>
            <person name="Russell A."/>
            <person name="Verberkmoes N.C."/>
            <person name="Hettich R.L."/>
            <person name="Gordon J.I."/>
        </authorList>
    </citation>
    <scope>NUCLEOTIDE SEQUENCE [LARGE SCALE GENOMIC DNA]</scope>
    <source>
        <strain>ATCC 33656 / DSM 3377 / JCM 17463 / KCTC 5835 / LMG 30912 / VPI 0990</strain>
    </source>
</reference>
<dbReference type="EC" id="2.7.1.33" evidence="1"/>
<dbReference type="EMBL" id="CP001107">
    <property type="protein sequence ID" value="ACR73865.1"/>
    <property type="molecule type" value="Genomic_DNA"/>
</dbReference>
<dbReference type="RefSeq" id="WP_012740989.1">
    <property type="nucleotide sequence ID" value="NZ_CAXSYD010000019.1"/>
</dbReference>
<dbReference type="SMR" id="C4Z9L7"/>
<dbReference type="STRING" id="515619.EUBREC_0060"/>
<dbReference type="PaxDb" id="515619-EUBREC_0060"/>
<dbReference type="KEGG" id="ere:EUBREC_0060"/>
<dbReference type="HOGENOM" id="CLU_066627_1_0_9"/>
<dbReference type="UniPathway" id="UPA00241">
    <property type="reaction ID" value="UER00352"/>
</dbReference>
<dbReference type="Proteomes" id="UP000001477">
    <property type="component" value="Chromosome"/>
</dbReference>
<dbReference type="GO" id="GO:0005737">
    <property type="term" value="C:cytoplasm"/>
    <property type="evidence" value="ECO:0007669"/>
    <property type="project" value="UniProtKB-SubCell"/>
</dbReference>
<dbReference type="GO" id="GO:0005524">
    <property type="term" value="F:ATP binding"/>
    <property type="evidence" value="ECO:0007669"/>
    <property type="project" value="UniProtKB-UniRule"/>
</dbReference>
<dbReference type="GO" id="GO:0046872">
    <property type="term" value="F:metal ion binding"/>
    <property type="evidence" value="ECO:0007669"/>
    <property type="project" value="UniProtKB-KW"/>
</dbReference>
<dbReference type="GO" id="GO:0004594">
    <property type="term" value="F:pantothenate kinase activity"/>
    <property type="evidence" value="ECO:0007669"/>
    <property type="project" value="UniProtKB-UniRule"/>
</dbReference>
<dbReference type="GO" id="GO:0015937">
    <property type="term" value="P:coenzyme A biosynthetic process"/>
    <property type="evidence" value="ECO:0007669"/>
    <property type="project" value="UniProtKB-UniRule"/>
</dbReference>
<dbReference type="CDD" id="cd24015">
    <property type="entry name" value="ASKHA_NBD_PanK-III"/>
    <property type="match status" value="1"/>
</dbReference>
<dbReference type="Gene3D" id="3.30.420.40">
    <property type="match status" value="2"/>
</dbReference>
<dbReference type="HAMAP" id="MF_01274">
    <property type="entry name" value="Pantothen_kinase_3"/>
    <property type="match status" value="1"/>
</dbReference>
<dbReference type="InterPro" id="IPR043129">
    <property type="entry name" value="ATPase_NBD"/>
</dbReference>
<dbReference type="InterPro" id="IPR004619">
    <property type="entry name" value="Type_III_PanK"/>
</dbReference>
<dbReference type="NCBIfam" id="TIGR00671">
    <property type="entry name" value="baf"/>
    <property type="match status" value="1"/>
</dbReference>
<dbReference type="NCBIfam" id="NF009848">
    <property type="entry name" value="PRK13318.1-6"/>
    <property type="match status" value="1"/>
</dbReference>
<dbReference type="NCBIfam" id="NF009855">
    <property type="entry name" value="PRK13321.1"/>
    <property type="match status" value="1"/>
</dbReference>
<dbReference type="PANTHER" id="PTHR34265">
    <property type="entry name" value="TYPE III PANTOTHENATE KINASE"/>
    <property type="match status" value="1"/>
</dbReference>
<dbReference type="PANTHER" id="PTHR34265:SF1">
    <property type="entry name" value="TYPE III PANTOTHENATE KINASE"/>
    <property type="match status" value="1"/>
</dbReference>
<dbReference type="Pfam" id="PF03309">
    <property type="entry name" value="Pan_kinase"/>
    <property type="match status" value="1"/>
</dbReference>
<dbReference type="SUPFAM" id="SSF53067">
    <property type="entry name" value="Actin-like ATPase domain"/>
    <property type="match status" value="2"/>
</dbReference>
<proteinExistence type="inferred from homology"/>
<comment type="function">
    <text evidence="1">Catalyzes the phosphorylation of pantothenate (Pan), the first step in CoA biosynthesis.</text>
</comment>
<comment type="catalytic activity">
    <reaction evidence="1">
        <text>(R)-pantothenate + ATP = (R)-4'-phosphopantothenate + ADP + H(+)</text>
        <dbReference type="Rhea" id="RHEA:16373"/>
        <dbReference type="ChEBI" id="CHEBI:10986"/>
        <dbReference type="ChEBI" id="CHEBI:15378"/>
        <dbReference type="ChEBI" id="CHEBI:29032"/>
        <dbReference type="ChEBI" id="CHEBI:30616"/>
        <dbReference type="ChEBI" id="CHEBI:456216"/>
        <dbReference type="EC" id="2.7.1.33"/>
    </reaction>
</comment>
<comment type="cofactor">
    <cofactor evidence="1">
        <name>NH4(+)</name>
        <dbReference type="ChEBI" id="CHEBI:28938"/>
    </cofactor>
    <cofactor evidence="1">
        <name>K(+)</name>
        <dbReference type="ChEBI" id="CHEBI:29103"/>
    </cofactor>
    <text evidence="1">A monovalent cation. Ammonium or potassium.</text>
</comment>
<comment type="pathway">
    <text evidence="1">Cofactor biosynthesis; coenzyme A biosynthesis; CoA from (R)-pantothenate: step 1/5.</text>
</comment>
<comment type="subunit">
    <text evidence="1">Homodimer.</text>
</comment>
<comment type="subcellular location">
    <subcellularLocation>
        <location evidence="1">Cytoplasm</location>
    </subcellularLocation>
</comment>
<comment type="similarity">
    <text evidence="1">Belongs to the type III pantothenate kinase family.</text>
</comment>
<protein>
    <recommendedName>
        <fullName evidence="1">Type III pantothenate kinase</fullName>
        <ecNumber evidence="1">2.7.1.33</ecNumber>
    </recommendedName>
    <alternativeName>
        <fullName evidence="1">PanK-III</fullName>
    </alternativeName>
    <alternativeName>
        <fullName evidence="1">Pantothenic acid kinase</fullName>
    </alternativeName>
</protein>
<evidence type="ECO:0000255" key="1">
    <source>
        <dbReference type="HAMAP-Rule" id="MF_01274"/>
    </source>
</evidence>
<feature type="chain" id="PRO_1000214186" description="Type III pantothenate kinase">
    <location>
        <begin position="1"/>
        <end position="260"/>
    </location>
</feature>
<feature type="active site" description="Proton acceptor" evidence="1">
    <location>
        <position position="109"/>
    </location>
</feature>
<feature type="binding site" evidence="1">
    <location>
        <begin position="6"/>
        <end position="13"/>
    </location>
    <ligand>
        <name>ATP</name>
        <dbReference type="ChEBI" id="CHEBI:30616"/>
    </ligand>
</feature>
<feature type="binding site" evidence="1">
    <location>
        <begin position="107"/>
        <end position="110"/>
    </location>
    <ligand>
        <name>substrate</name>
    </ligand>
</feature>
<feature type="binding site" evidence="1">
    <location>
        <position position="129"/>
    </location>
    <ligand>
        <name>K(+)</name>
        <dbReference type="ChEBI" id="CHEBI:29103"/>
    </ligand>
</feature>
<feature type="binding site" evidence="1">
    <location>
        <position position="132"/>
    </location>
    <ligand>
        <name>ATP</name>
        <dbReference type="ChEBI" id="CHEBI:30616"/>
    </ligand>
</feature>
<feature type="binding site" evidence="1">
    <location>
        <position position="184"/>
    </location>
    <ligand>
        <name>substrate</name>
    </ligand>
</feature>
<sequence>MILALDVGNTNITCGVFDGDRIKASFRITTKMPRTSDEYGMLLSTLLERNQVGMDDIHDAIICSVVPNIMHSLQNGLIKYFNIRPIIVEAGIKTGIRIATPNPQQIGADRIVDAVAAYELYGGPVLVIDFGTATTYDMVDENGTFMGGITAPGIRISAKALWEDAAKLPEIEIKKPDNILGKDTITSMQAGLVYGQIGQTEYIINKVKEETGMYDAKVVVTGGLGRIISNETENVDVYDPDLTLKGINLVYRKQNRKGVK</sequence>
<organism>
    <name type="scientific">Agathobacter rectalis (strain ATCC 33656 / DSM 3377 / JCM 17463 / KCTC 5835 / VPI 0990)</name>
    <name type="common">Eubacterium rectale</name>
    <dbReference type="NCBI Taxonomy" id="515619"/>
    <lineage>
        <taxon>Bacteria</taxon>
        <taxon>Bacillati</taxon>
        <taxon>Bacillota</taxon>
        <taxon>Clostridia</taxon>
        <taxon>Lachnospirales</taxon>
        <taxon>Lachnospiraceae</taxon>
        <taxon>Agathobacter</taxon>
    </lineage>
</organism>
<keyword id="KW-0067">ATP-binding</keyword>
<keyword id="KW-0173">Coenzyme A biosynthesis</keyword>
<keyword id="KW-0963">Cytoplasm</keyword>
<keyword id="KW-0418">Kinase</keyword>
<keyword id="KW-0479">Metal-binding</keyword>
<keyword id="KW-0547">Nucleotide-binding</keyword>
<keyword id="KW-0630">Potassium</keyword>
<keyword id="KW-0808">Transferase</keyword>
<name>COAX_AGARV</name>
<accession>C4Z9L7</accession>
<gene>
    <name evidence="1" type="primary">coaX</name>
    <name type="ordered locus">EUBREC_0060</name>
</gene>